<accession>P33035</accession>
<organism>
    <name type="scientific">Microchaete diplosiphon</name>
    <name type="common">Fremyella diplosiphon</name>
    <dbReference type="NCBI Taxonomy" id="1197"/>
    <lineage>
        <taxon>Bacteria</taxon>
        <taxon>Bacillati</taxon>
        <taxon>Cyanobacteriota</taxon>
        <taxon>Cyanophyceae</taxon>
        <taxon>Nostocales</taxon>
        <taxon>Rivulariaceae</taxon>
        <taxon>Microchaete</taxon>
    </lineage>
</organism>
<proteinExistence type="inferred from homology"/>
<feature type="initiator methionine" description="Removed" evidence="8">
    <location>
        <position position="1"/>
    </location>
</feature>
<feature type="chain" id="PRO_0000153216" description="Glutamine synthetase">
    <location>
        <begin position="2"/>
        <end position="471"/>
    </location>
</feature>
<feature type="domain" description="GS beta-grasp" evidence="6">
    <location>
        <begin position="14"/>
        <end position="99"/>
    </location>
</feature>
<feature type="domain" description="GS catalytic" evidence="7">
    <location>
        <begin position="106"/>
        <end position="471"/>
    </location>
</feature>
<feature type="binding site" evidence="3">
    <location>
        <position position="131"/>
    </location>
    <ligand>
        <name>Mg(2+)</name>
        <dbReference type="ChEBI" id="CHEBI:18420"/>
        <label>1</label>
    </ligand>
</feature>
<feature type="binding site" evidence="3">
    <location>
        <position position="133"/>
    </location>
    <ligand>
        <name>Mg(2+)</name>
        <dbReference type="ChEBI" id="CHEBI:18420"/>
        <label>2</label>
    </ligand>
</feature>
<feature type="binding site" evidence="3">
    <location>
        <position position="208"/>
    </location>
    <ligand>
        <name>ATP</name>
        <dbReference type="ChEBI" id="CHEBI:30616"/>
    </ligand>
</feature>
<feature type="binding site" evidence="3">
    <location>
        <position position="213"/>
    </location>
    <ligand>
        <name>Mg(2+)</name>
        <dbReference type="ChEBI" id="CHEBI:18420"/>
        <label>2</label>
    </ligand>
</feature>
<feature type="binding site" evidence="3">
    <location>
        <position position="221"/>
    </location>
    <ligand>
        <name>Mg(2+)</name>
        <dbReference type="ChEBI" id="CHEBI:18420"/>
        <label>2</label>
    </ligand>
</feature>
<feature type="binding site" evidence="4">
    <location>
        <begin position="265"/>
        <end position="266"/>
    </location>
    <ligand>
        <name>L-glutamate</name>
        <dbReference type="ChEBI" id="CHEBI:29985"/>
    </ligand>
</feature>
<feature type="binding site" evidence="2">
    <location>
        <position position="266"/>
    </location>
    <ligand>
        <name>L-glutamate</name>
        <dbReference type="ChEBI" id="CHEBI:29985"/>
    </ligand>
</feature>
<feature type="binding site" evidence="4">
    <location>
        <position position="270"/>
    </location>
    <ligand>
        <name>Mg(2+)</name>
        <dbReference type="ChEBI" id="CHEBI:18420"/>
        <label>1</label>
    </ligand>
</feature>
<feature type="binding site" evidence="4">
    <location>
        <begin position="272"/>
        <end position="274"/>
    </location>
    <ligand>
        <name>ATP</name>
        <dbReference type="ChEBI" id="CHEBI:30616"/>
    </ligand>
</feature>
<feature type="binding site" evidence="3">
    <location>
        <position position="274"/>
    </location>
    <ligand>
        <name>ATP</name>
        <dbReference type="ChEBI" id="CHEBI:30616"/>
    </ligand>
</feature>
<feature type="binding site" evidence="1">
    <location>
        <position position="322"/>
    </location>
    <ligand>
        <name>L-glutamate</name>
        <dbReference type="ChEBI" id="CHEBI:29985"/>
    </ligand>
</feature>
<feature type="binding site" evidence="1">
    <location>
        <position position="328"/>
    </location>
    <ligand>
        <name>L-glutamate</name>
        <dbReference type="ChEBI" id="CHEBI:29985"/>
    </ligand>
</feature>
<feature type="binding site" evidence="3">
    <location>
        <position position="340"/>
    </location>
    <ligand>
        <name>ATP</name>
        <dbReference type="ChEBI" id="CHEBI:30616"/>
    </ligand>
</feature>
<feature type="binding site" evidence="4">
    <location>
        <position position="340"/>
    </location>
    <ligand>
        <name>L-glutamate</name>
        <dbReference type="ChEBI" id="CHEBI:29985"/>
    </ligand>
</feature>
<feature type="binding site" evidence="3">
    <location>
        <position position="345"/>
    </location>
    <ligand>
        <name>ATP</name>
        <dbReference type="ChEBI" id="CHEBI:30616"/>
    </ligand>
</feature>
<feature type="binding site" evidence="3">
    <location>
        <position position="354"/>
    </location>
    <ligand>
        <name>ATP</name>
        <dbReference type="ChEBI" id="CHEBI:30616"/>
    </ligand>
</feature>
<feature type="binding site" evidence="3">
    <location>
        <position position="359"/>
    </location>
    <ligand>
        <name>Mg(2+)</name>
        <dbReference type="ChEBI" id="CHEBI:18420"/>
        <label>1</label>
    </ligand>
</feature>
<feature type="binding site" evidence="1">
    <location>
        <position position="361"/>
    </location>
    <ligand>
        <name>L-glutamate</name>
        <dbReference type="ChEBI" id="CHEBI:29985"/>
    </ligand>
</feature>
<feature type="modified residue" description="O-AMP-tyrosine" evidence="4">
    <location>
        <position position="399"/>
    </location>
</feature>
<sequence length="471" mass="53050">MTTPQEVLKLIQDQKIQMIDLKFIDTPGTWQHLTVYYNQIDESSFTDGVPFDGSSIRGWKGIEESDMTMVLDPNTAWIDPFMKEPTLSIICSIKEPRTGEWYNRCPRVIAQKAIDYLVSTGLGDTAFFGPEAEFFIFDDARFDQTANSGYYYVDSVEGRWNSGKDEGPNLAYKPRFKEGYFPVAPTDTFQDMRTEMLLTMAACGVPIEKQHHEVATGGQCELGFRFGKLIEAADWLMTYKYVIKNVAKKYGRTVTFMPKPIFGDNGSGMHCHQSIWKDGKPLFGGDKYAGLSDMALYYIGGILKHAPALLGITNPTTNSYKRLVPGYEAPVNLAYSQGNRSASVRIPLSGTNPKAKRLEFRCPDATSNPYLAFAAMLCAGIDGIKNKIHPGEPLDRNIYELSPEELAKVPSTPGSLELALEALENDHAFLTESGVFTEDFIQNWIEYKLVNEVKQLQLRPHPYEFYLYYDC</sequence>
<evidence type="ECO:0000250" key="1">
    <source>
        <dbReference type="UniProtKB" id="P0A1P6"/>
    </source>
</evidence>
<evidence type="ECO:0000250" key="2">
    <source>
        <dbReference type="UniProtKB" id="P12425"/>
    </source>
</evidence>
<evidence type="ECO:0000250" key="3">
    <source>
        <dbReference type="UniProtKB" id="P77961"/>
    </source>
</evidence>
<evidence type="ECO:0000250" key="4">
    <source>
        <dbReference type="UniProtKB" id="P9WN39"/>
    </source>
</evidence>
<evidence type="ECO:0000250" key="5">
    <source>
        <dbReference type="UniProtKB" id="Q3V5W6"/>
    </source>
</evidence>
<evidence type="ECO:0000255" key="6">
    <source>
        <dbReference type="PROSITE-ProRule" id="PRU01330"/>
    </source>
</evidence>
<evidence type="ECO:0000255" key="7">
    <source>
        <dbReference type="PROSITE-ProRule" id="PRU01331"/>
    </source>
</evidence>
<evidence type="ECO:0000305" key="8"/>
<keyword id="KW-0067">ATP-binding</keyword>
<keyword id="KW-0963">Cytoplasm</keyword>
<keyword id="KW-0436">Ligase</keyword>
<keyword id="KW-0460">Magnesium</keyword>
<keyword id="KW-0479">Metal-binding</keyword>
<keyword id="KW-0547">Nucleotide-binding</keyword>
<keyword id="KW-0597">Phosphoprotein</keyword>
<reference key="1">
    <citation type="journal article" date="1992" name="Biochem. Biophys. Res. Commun.">
        <title>Molecular characterization of the gene encoding glutamine synthetase in the cyanobacterium Calothrix sp. PCC 7601.</title>
        <authorList>
            <person name="Elmorjani K."/>
            <person name="Liotenberg S."/>
            <person name="Houmard J."/>
            <person name="de Marsac N.T."/>
        </authorList>
    </citation>
    <scope>NUCLEOTIDE SEQUENCE [GENOMIC DNA]</scope>
</reference>
<comment type="function">
    <text evidence="3">Involved in nitrogen metabolism via ammonium assimilation. Catalyzes the ATP-dependent biosynthesis of glutamine from glutamate and ammonia.</text>
</comment>
<comment type="catalytic activity">
    <reaction evidence="3">
        <text>L-glutamate + NH4(+) + ATP = L-glutamine + ADP + phosphate + H(+)</text>
        <dbReference type="Rhea" id="RHEA:16169"/>
        <dbReference type="ChEBI" id="CHEBI:15378"/>
        <dbReference type="ChEBI" id="CHEBI:28938"/>
        <dbReference type="ChEBI" id="CHEBI:29985"/>
        <dbReference type="ChEBI" id="CHEBI:30616"/>
        <dbReference type="ChEBI" id="CHEBI:43474"/>
        <dbReference type="ChEBI" id="CHEBI:58359"/>
        <dbReference type="ChEBI" id="CHEBI:456216"/>
        <dbReference type="EC" id="6.3.1.2"/>
    </reaction>
</comment>
<comment type="cofactor">
    <cofactor evidence="3">
        <name>Mg(2+)</name>
        <dbReference type="ChEBI" id="CHEBI:18420"/>
    </cofactor>
    <text evidence="3">Binds 2 Mg(2+) ions per subunit.</text>
</comment>
<comment type="activity regulation">
    <text evidence="5">The activity of this enzyme could be controlled by adenylation under conditions of abundant glutamine.</text>
</comment>
<comment type="subunit">
    <text evidence="3">Oligomer of 12 subunits arranged in the form of two hexagons.</text>
</comment>
<comment type="subcellular location">
    <subcellularLocation>
        <location evidence="4">Cytoplasm</location>
    </subcellularLocation>
</comment>
<comment type="similarity">
    <text evidence="3">Belongs to the glutamine synthetase family.</text>
</comment>
<protein>
    <recommendedName>
        <fullName evidence="3">Glutamine synthetase</fullName>
        <shortName evidence="3">GS</shortName>
        <ecNumber evidence="3">6.3.1.2</ecNumber>
    </recommendedName>
    <alternativeName>
        <fullName evidence="3">Glutamate--ammonia ligase</fullName>
    </alternativeName>
    <alternativeName>
        <fullName evidence="3">Glutamine synthetase I beta</fullName>
        <shortName evidence="3">GSI beta</shortName>
    </alternativeName>
</protein>
<name>GLN1B_MICDP</name>
<dbReference type="EC" id="6.3.1.2" evidence="3"/>
<dbReference type="EMBL" id="L05609">
    <property type="protein sequence ID" value="AAA23288.1"/>
    <property type="molecule type" value="Genomic_DNA"/>
</dbReference>
<dbReference type="SMR" id="P33035"/>
<dbReference type="GO" id="GO:0005737">
    <property type="term" value="C:cytoplasm"/>
    <property type="evidence" value="ECO:0007669"/>
    <property type="project" value="UniProtKB-SubCell"/>
</dbReference>
<dbReference type="GO" id="GO:0016020">
    <property type="term" value="C:membrane"/>
    <property type="evidence" value="ECO:0007669"/>
    <property type="project" value="TreeGrafter"/>
</dbReference>
<dbReference type="GO" id="GO:0005524">
    <property type="term" value="F:ATP binding"/>
    <property type="evidence" value="ECO:0007669"/>
    <property type="project" value="UniProtKB-KW"/>
</dbReference>
<dbReference type="GO" id="GO:0004356">
    <property type="term" value="F:glutamine synthetase activity"/>
    <property type="evidence" value="ECO:0007669"/>
    <property type="project" value="UniProtKB-EC"/>
</dbReference>
<dbReference type="GO" id="GO:0046872">
    <property type="term" value="F:metal ion binding"/>
    <property type="evidence" value="ECO:0007669"/>
    <property type="project" value="UniProtKB-KW"/>
</dbReference>
<dbReference type="GO" id="GO:0006542">
    <property type="term" value="P:glutamine biosynthetic process"/>
    <property type="evidence" value="ECO:0007669"/>
    <property type="project" value="InterPro"/>
</dbReference>
<dbReference type="GO" id="GO:0019740">
    <property type="term" value="P:nitrogen utilization"/>
    <property type="evidence" value="ECO:0007669"/>
    <property type="project" value="TreeGrafter"/>
</dbReference>
<dbReference type="FunFam" id="3.30.590.10:FF:000001">
    <property type="entry name" value="Glutamine synthetase"/>
    <property type="match status" value="1"/>
</dbReference>
<dbReference type="Gene3D" id="3.10.20.70">
    <property type="entry name" value="Glutamine synthetase, N-terminal domain"/>
    <property type="match status" value="1"/>
</dbReference>
<dbReference type="Gene3D" id="3.30.590.10">
    <property type="entry name" value="Glutamine synthetase/guanido kinase, catalytic domain"/>
    <property type="match status" value="1"/>
</dbReference>
<dbReference type="InterPro" id="IPR008147">
    <property type="entry name" value="Gln_synt_N"/>
</dbReference>
<dbReference type="InterPro" id="IPR036651">
    <property type="entry name" value="Gln_synt_N_sf"/>
</dbReference>
<dbReference type="InterPro" id="IPR014746">
    <property type="entry name" value="Gln_synth/guanido_kin_cat_dom"/>
</dbReference>
<dbReference type="InterPro" id="IPR008146">
    <property type="entry name" value="Gln_synth_cat_dom"/>
</dbReference>
<dbReference type="InterPro" id="IPR027303">
    <property type="entry name" value="Gln_synth_gly_rich_site"/>
</dbReference>
<dbReference type="InterPro" id="IPR004809">
    <property type="entry name" value="Gln_synth_I"/>
</dbReference>
<dbReference type="InterPro" id="IPR001637">
    <property type="entry name" value="Gln_synth_I_adenylation_site"/>
</dbReference>
<dbReference type="InterPro" id="IPR027302">
    <property type="entry name" value="Gln_synth_N_conserv_site"/>
</dbReference>
<dbReference type="NCBIfam" id="TIGR00653">
    <property type="entry name" value="GlnA"/>
    <property type="match status" value="1"/>
</dbReference>
<dbReference type="PANTHER" id="PTHR43407">
    <property type="entry name" value="GLUTAMINE SYNTHETASE"/>
    <property type="match status" value="1"/>
</dbReference>
<dbReference type="PANTHER" id="PTHR43407:SF1">
    <property type="entry name" value="LENGSIN"/>
    <property type="match status" value="1"/>
</dbReference>
<dbReference type="Pfam" id="PF00120">
    <property type="entry name" value="Gln-synt_C"/>
    <property type="match status" value="1"/>
</dbReference>
<dbReference type="Pfam" id="PF03951">
    <property type="entry name" value="Gln-synt_N"/>
    <property type="match status" value="1"/>
</dbReference>
<dbReference type="SMART" id="SM01230">
    <property type="entry name" value="Gln-synt_C"/>
    <property type="match status" value="1"/>
</dbReference>
<dbReference type="SUPFAM" id="SSF54368">
    <property type="entry name" value="Glutamine synthetase, N-terminal domain"/>
    <property type="match status" value="1"/>
</dbReference>
<dbReference type="SUPFAM" id="SSF55931">
    <property type="entry name" value="Glutamine synthetase/guanido kinase"/>
    <property type="match status" value="1"/>
</dbReference>
<dbReference type="PROSITE" id="PS00180">
    <property type="entry name" value="GLNA_1"/>
    <property type="match status" value="1"/>
</dbReference>
<dbReference type="PROSITE" id="PS00182">
    <property type="entry name" value="GLNA_ADENYLATION"/>
    <property type="match status" value="1"/>
</dbReference>
<dbReference type="PROSITE" id="PS00181">
    <property type="entry name" value="GLNA_ATP"/>
    <property type="match status" value="1"/>
</dbReference>
<dbReference type="PROSITE" id="PS51986">
    <property type="entry name" value="GS_BETA_GRASP"/>
    <property type="match status" value="1"/>
</dbReference>
<dbReference type="PROSITE" id="PS51987">
    <property type="entry name" value="GS_CATALYTIC"/>
    <property type="match status" value="1"/>
</dbReference>
<gene>
    <name evidence="3" type="primary">glnA</name>
</gene>